<proteinExistence type="inferred from homology"/>
<comment type="function">
    <text evidence="1">Catalyzes the decarboxylation of four acetate groups of uroporphyrinogen-III to yield coproporphyrinogen-III.</text>
</comment>
<comment type="catalytic activity">
    <reaction evidence="1">
        <text>uroporphyrinogen III + 4 H(+) = coproporphyrinogen III + 4 CO2</text>
        <dbReference type="Rhea" id="RHEA:19865"/>
        <dbReference type="ChEBI" id="CHEBI:15378"/>
        <dbReference type="ChEBI" id="CHEBI:16526"/>
        <dbReference type="ChEBI" id="CHEBI:57308"/>
        <dbReference type="ChEBI" id="CHEBI:57309"/>
        <dbReference type="EC" id="4.1.1.37"/>
    </reaction>
</comment>
<comment type="pathway">
    <text evidence="1">Porphyrin-containing compound metabolism; protoporphyrin-IX biosynthesis; coproporphyrinogen-III from 5-aminolevulinate: step 4/4.</text>
</comment>
<comment type="subunit">
    <text evidence="1">Homodimer.</text>
</comment>
<comment type="subcellular location">
    <subcellularLocation>
        <location evidence="1">Cytoplasm</location>
    </subcellularLocation>
</comment>
<comment type="similarity">
    <text evidence="1">Belongs to the uroporphyrinogen decarboxylase family.</text>
</comment>
<dbReference type="EC" id="4.1.1.37" evidence="1"/>
<dbReference type="EMBL" id="CP000656">
    <property type="protein sequence ID" value="ABP46390.1"/>
    <property type="molecule type" value="Genomic_DNA"/>
</dbReference>
<dbReference type="SMR" id="A4TCS1"/>
<dbReference type="STRING" id="350054.Mflv_3919"/>
<dbReference type="KEGG" id="mgi:Mflv_3919"/>
<dbReference type="eggNOG" id="COG0407">
    <property type="taxonomic scope" value="Bacteria"/>
</dbReference>
<dbReference type="HOGENOM" id="CLU_040933_0_1_11"/>
<dbReference type="OrthoDB" id="9806656at2"/>
<dbReference type="UniPathway" id="UPA00251">
    <property type="reaction ID" value="UER00321"/>
</dbReference>
<dbReference type="GO" id="GO:0005829">
    <property type="term" value="C:cytosol"/>
    <property type="evidence" value="ECO:0007669"/>
    <property type="project" value="TreeGrafter"/>
</dbReference>
<dbReference type="GO" id="GO:0004853">
    <property type="term" value="F:uroporphyrinogen decarboxylase activity"/>
    <property type="evidence" value="ECO:0007669"/>
    <property type="project" value="UniProtKB-UniRule"/>
</dbReference>
<dbReference type="GO" id="GO:0006782">
    <property type="term" value="P:protoporphyrinogen IX biosynthetic process"/>
    <property type="evidence" value="ECO:0007669"/>
    <property type="project" value="UniProtKB-UniRule"/>
</dbReference>
<dbReference type="CDD" id="cd00717">
    <property type="entry name" value="URO-D"/>
    <property type="match status" value="1"/>
</dbReference>
<dbReference type="Gene3D" id="3.20.20.210">
    <property type="match status" value="1"/>
</dbReference>
<dbReference type="HAMAP" id="MF_00218">
    <property type="entry name" value="URO_D"/>
    <property type="match status" value="1"/>
</dbReference>
<dbReference type="InterPro" id="IPR038071">
    <property type="entry name" value="UROD/MetE-like_sf"/>
</dbReference>
<dbReference type="InterPro" id="IPR006361">
    <property type="entry name" value="Uroporphyrinogen_deCO2ase_HemE"/>
</dbReference>
<dbReference type="InterPro" id="IPR000257">
    <property type="entry name" value="Uroporphyrinogen_deCOase"/>
</dbReference>
<dbReference type="NCBIfam" id="TIGR01464">
    <property type="entry name" value="hemE"/>
    <property type="match status" value="1"/>
</dbReference>
<dbReference type="PANTHER" id="PTHR21091">
    <property type="entry name" value="METHYLTETRAHYDROFOLATE:HOMOCYSTEINE METHYLTRANSFERASE RELATED"/>
    <property type="match status" value="1"/>
</dbReference>
<dbReference type="PANTHER" id="PTHR21091:SF169">
    <property type="entry name" value="UROPORPHYRINOGEN DECARBOXYLASE"/>
    <property type="match status" value="1"/>
</dbReference>
<dbReference type="Pfam" id="PF01208">
    <property type="entry name" value="URO-D"/>
    <property type="match status" value="1"/>
</dbReference>
<dbReference type="SUPFAM" id="SSF51726">
    <property type="entry name" value="UROD/MetE-like"/>
    <property type="match status" value="1"/>
</dbReference>
<dbReference type="PROSITE" id="PS00906">
    <property type="entry name" value="UROD_1"/>
    <property type="match status" value="1"/>
</dbReference>
<dbReference type="PROSITE" id="PS00907">
    <property type="entry name" value="UROD_2"/>
    <property type="match status" value="1"/>
</dbReference>
<organism>
    <name type="scientific">Mycolicibacterium gilvum (strain PYR-GCK)</name>
    <name type="common">Mycobacterium gilvum (strain PYR-GCK)</name>
    <dbReference type="NCBI Taxonomy" id="350054"/>
    <lineage>
        <taxon>Bacteria</taxon>
        <taxon>Bacillati</taxon>
        <taxon>Actinomycetota</taxon>
        <taxon>Actinomycetes</taxon>
        <taxon>Mycobacteriales</taxon>
        <taxon>Mycobacteriaceae</taxon>
        <taxon>Mycolicibacterium</taxon>
    </lineage>
</organism>
<feature type="chain" id="PRO_1000078078" description="Uroporphyrinogen decarboxylase">
    <location>
        <begin position="1"/>
        <end position="354"/>
    </location>
</feature>
<feature type="binding site" evidence="1">
    <location>
        <begin position="30"/>
        <end position="34"/>
    </location>
    <ligand>
        <name>substrate</name>
    </ligand>
</feature>
<feature type="binding site" evidence="1">
    <location>
        <position position="79"/>
    </location>
    <ligand>
        <name>substrate</name>
    </ligand>
</feature>
<feature type="binding site" evidence="1">
    <location>
        <position position="154"/>
    </location>
    <ligand>
        <name>substrate</name>
    </ligand>
</feature>
<feature type="binding site" evidence="1">
    <location>
        <position position="209"/>
    </location>
    <ligand>
        <name>substrate</name>
    </ligand>
</feature>
<feature type="binding site" evidence="1">
    <location>
        <position position="333"/>
    </location>
    <ligand>
        <name>substrate</name>
    </ligand>
</feature>
<feature type="site" description="Transition state stabilizer" evidence="1">
    <location>
        <position position="79"/>
    </location>
</feature>
<accession>A4TCS1</accession>
<gene>
    <name evidence="1" type="primary">hemE</name>
    <name type="ordered locus">Mflv_3919</name>
</gene>
<protein>
    <recommendedName>
        <fullName evidence="1">Uroporphyrinogen decarboxylase</fullName>
        <shortName evidence="1">UPD</shortName>
        <shortName evidence="1">URO-D</shortName>
        <ecNumber evidence="1">4.1.1.37</ecNumber>
    </recommendedName>
</protein>
<keyword id="KW-0963">Cytoplasm</keyword>
<keyword id="KW-0210">Decarboxylase</keyword>
<keyword id="KW-0456">Lyase</keyword>
<keyword id="KW-0627">Porphyrin biosynthesis</keyword>
<reference key="1">
    <citation type="submission" date="2007-04" db="EMBL/GenBank/DDBJ databases">
        <title>Complete sequence of chromosome of Mycobacterium gilvum PYR-GCK.</title>
        <authorList>
            <consortium name="US DOE Joint Genome Institute"/>
            <person name="Copeland A."/>
            <person name="Lucas S."/>
            <person name="Lapidus A."/>
            <person name="Barry K."/>
            <person name="Detter J.C."/>
            <person name="Glavina del Rio T."/>
            <person name="Hammon N."/>
            <person name="Israni S."/>
            <person name="Dalin E."/>
            <person name="Tice H."/>
            <person name="Pitluck S."/>
            <person name="Chain P."/>
            <person name="Malfatti S."/>
            <person name="Shin M."/>
            <person name="Vergez L."/>
            <person name="Schmutz J."/>
            <person name="Larimer F."/>
            <person name="Land M."/>
            <person name="Hauser L."/>
            <person name="Kyrpides N."/>
            <person name="Mikhailova N."/>
            <person name="Miller C."/>
            <person name="Richardson P."/>
        </authorList>
    </citation>
    <scope>NUCLEOTIDE SEQUENCE [LARGE SCALE GENOMIC DNA]</scope>
    <source>
        <strain>PYR-GCK</strain>
    </source>
</reference>
<evidence type="ECO:0000255" key="1">
    <source>
        <dbReference type="HAMAP-Rule" id="MF_00218"/>
    </source>
</evidence>
<name>DCUP_MYCGI</name>
<sequence>MNTRRELPESPYLAAAAGRKPHRVPVWMMRQAGRSLPEYRELRAKNTMMQACFDADLITEITLQPVRRHGVDAAILFSDIVVPLRAAGIDLDIVPDVGPVIAHPIRTAADVATVSPLRRETVAPVATAIGQLTAALGDVALIGFAGAPFTLASYLIEGGPSRNHERTKAMMLGETETWNALMAALTDVTIEFLRVQLDAGVDAIQVFDSWAGTLSLADYRAYVLPHSARVFEALAGYGVPMTHFGVGTAELLGAMSEAVSGHGVPAVVGVDWRTSLTDAAARVRPGCALQGNLDPVVLLAGWPVVERAVRAVVEDGRRAVDAGATGHVFNLGHGVLPATDPAIITDAVALVHQL</sequence>